<dbReference type="EMBL" id="X04390">
    <property type="protein sequence ID" value="CAA27978.1"/>
    <property type="molecule type" value="Genomic_DNA"/>
</dbReference>
<dbReference type="EMBL" id="M64097">
    <property type="protein sequence ID" value="AAA32394.1"/>
    <property type="molecule type" value="Genomic_DNA"/>
</dbReference>
<dbReference type="EMBL" id="AF083977">
    <property type="protein sequence ID" value="AAF01087.1"/>
    <property type="molecule type" value="Genomic_DNA"/>
</dbReference>
<dbReference type="PIR" id="A24331">
    <property type="entry name" value="DNBPMU"/>
</dbReference>
<dbReference type="RefSeq" id="NP_050614.1">
    <property type="nucleotide sequence ID" value="NC_000929.1"/>
</dbReference>
<dbReference type="SMR" id="P06023"/>
<dbReference type="GeneID" id="2636288"/>
<dbReference type="KEGG" id="vg:2636288"/>
<dbReference type="Proteomes" id="UP000002611">
    <property type="component" value="Genome"/>
</dbReference>
<dbReference type="Proteomes" id="UP000401936">
    <property type="component" value="Segment"/>
</dbReference>
<dbReference type="GO" id="GO:0030430">
    <property type="term" value="C:host cell cytoplasm"/>
    <property type="evidence" value="ECO:0007669"/>
    <property type="project" value="UniProtKB-SubCell"/>
</dbReference>
<dbReference type="GO" id="GO:0003690">
    <property type="term" value="F:double-stranded DNA binding"/>
    <property type="evidence" value="ECO:0007669"/>
    <property type="project" value="InterPro"/>
</dbReference>
<dbReference type="GO" id="GO:0042262">
    <property type="term" value="P:DNA protection"/>
    <property type="evidence" value="ECO:0007669"/>
    <property type="project" value="InterPro"/>
</dbReference>
<dbReference type="GO" id="GO:0099016">
    <property type="term" value="P:symbiont-mediated evasion of DNA end degradation by host"/>
    <property type="evidence" value="ECO:0007669"/>
    <property type="project" value="UniProtKB-KW"/>
</dbReference>
<dbReference type="GO" id="GO:0052170">
    <property type="term" value="P:symbiont-mediated suppression of host innate immune response"/>
    <property type="evidence" value="ECO:0007669"/>
    <property type="project" value="UniProtKB-KW"/>
</dbReference>
<dbReference type="Gene3D" id="1.20.5.170">
    <property type="match status" value="1"/>
</dbReference>
<dbReference type="InterPro" id="IPR009951">
    <property type="entry name" value="Host-nuc_inhib_Gam"/>
</dbReference>
<dbReference type="Pfam" id="PF07352">
    <property type="entry name" value="Phage_Mu_Gam"/>
    <property type="match status" value="1"/>
</dbReference>
<dbReference type="SUPFAM" id="SSF161266">
    <property type="entry name" value="Gam-like"/>
    <property type="match status" value="1"/>
</dbReference>
<evidence type="ECO:0000255" key="1"/>
<evidence type="ECO:0000269" key="2">
    <source>
    </source>
</evidence>
<evidence type="ECO:0000269" key="3">
    <source>
    </source>
</evidence>
<evidence type="ECO:0000305" key="4"/>
<sequence>MAKPAKRIKSAAAAYVPQNRDAVITDIKRIGDLQREASRLETEMNDAIAEITEKFAARIAPIKTDIETLSKGVQGWCEANRDELTNGGKVKTANLVTGDVSWRVRPPSVSIRGMDAVMETLERLGLQRFIRTKQEINKEAILLEPKAVAGVAGITVKSGIEDFSIIPFEQEAGI</sequence>
<organism>
    <name type="scientific">Escherichia phage Mu</name>
    <name type="common">Bacteriophage Mu</name>
    <dbReference type="NCBI Taxonomy" id="2681603"/>
    <lineage>
        <taxon>Viruses</taxon>
        <taxon>Duplodnaviria</taxon>
        <taxon>Heunggongvirae</taxon>
        <taxon>Uroviricota</taxon>
        <taxon>Caudoviricetes</taxon>
        <taxon>Muvirus</taxon>
        <taxon>Muvirus mu</taxon>
    </lineage>
</organism>
<protein>
    <recommendedName>
        <fullName>Putative DNA ends protecting protein gam</fullName>
    </recommendedName>
    <alternativeName>
        <fullName>Gene product 10</fullName>
        <shortName>gp10</shortName>
    </alternativeName>
</protein>
<accession>P06023</accession>
<comment type="function">
    <text evidence="2">Protects linear double-stranded DNA from host exonuclease degradation. Binds to linear dsDNA irrespective of the precise architecture of the DNA terminus but not to RNA or to ssDNA.</text>
</comment>
<comment type="subunit">
    <text evidence="2">Homodimer.</text>
</comment>
<comment type="subcellular location">
    <subcellularLocation>
        <location evidence="4">Host cytoplasm</location>
    </subcellularLocation>
</comment>
<comment type="induction">
    <text evidence="3">Expressed in the early phase of the viral replicative cycle. Expression of early genes is repressed by viral Repc (latency) and favored by viral Ner protein.</text>
</comment>
<keyword id="KW-0175">Coiled coil</keyword>
<keyword id="KW-1256">DNA end degradation evasion by virus</keyword>
<keyword id="KW-0238">DNA-binding</keyword>
<keyword id="KW-0244">Early protein</keyword>
<keyword id="KW-1035">Host cytoplasm</keyword>
<keyword id="KW-0945">Host-virus interaction</keyword>
<keyword id="KW-1090">Inhibition of host innate immune response by virus</keyword>
<keyword id="KW-1185">Reference proteome</keyword>
<keyword id="KW-0899">Viral immunoevasion</keyword>
<gene>
    <name type="primary">gam</name>
    <name type="ordered locus">Mup10</name>
</gene>
<feature type="chain" id="PRO_0000077639" description="Putative DNA ends protecting protein gam">
    <location>
        <begin position="1"/>
        <end position="174"/>
    </location>
</feature>
<feature type="coiled-coil region" evidence="1">
    <location>
        <begin position="26"/>
        <end position="56"/>
    </location>
</feature>
<feature type="sequence conflict" description="In Ref. 1; CAA27978." evidence="4" ref="1">
    <original>I</original>
    <variation>V</variation>
    <location>
        <position position="130"/>
    </location>
</feature>
<reference key="1">
    <citation type="journal article" date="1986" name="Nucleic Acids Res.">
        <title>Purification of the gam gene-product of bacteriophage Mu and determination of the nucleotide sequence of the gam gene.</title>
        <authorList>
            <person name="Akroyd J.E."/>
            <person name="Clayson E."/>
            <person name="Higgins N.P."/>
        </authorList>
    </citation>
    <scope>NUCLEOTIDE SEQUENCE [GENOMIC DNA]</scope>
</reference>
<reference key="2">
    <citation type="book" date="1987" name="Phage Mu">
        <title>Sequence of the left end of Mu.</title>
        <editorList>
            <person name="Symonds N."/>
            <person name="Toussaint A."/>
            <person name="van de Putte P."/>
            <person name="Howe M.M."/>
        </editorList>
        <authorList>
            <person name="Priess H."/>
            <person name="Brauer B."/>
            <person name="Schmidt C."/>
            <person name="Kamp D."/>
        </authorList>
    </citation>
    <scope>NUCLEOTIDE SEQUENCE [GENOMIC DNA]</scope>
</reference>
<reference key="3">
    <citation type="journal article" date="2002" name="J. Mol. Biol.">
        <title>Bacteriophage Mu genome sequence: analysis and comparison with Mu-like prophages in Haemophilus, Neisseria and Deinococcus.</title>
        <authorList>
            <person name="Morgan G.J."/>
            <person name="Hatfull G.F."/>
            <person name="Casjens S."/>
            <person name="Hendrix R.W."/>
        </authorList>
    </citation>
    <scope>NUCLEOTIDE SEQUENCE [LARGE SCALE GENOMIC DNA]</scope>
</reference>
<reference key="4">
    <citation type="journal article" date="1986" name="Gene">
        <title>Localization of the gam gene of bacteriophage mu and characterisation of the gene product.</title>
        <authorList>
            <person name="Akroyd J."/>
            <person name="Symonds N."/>
        </authorList>
    </citation>
    <scope>IDENTIFICATION</scope>
</reference>
<reference key="5">
    <citation type="journal article" date="1989" name="J. Bacteriol.">
        <title>Localization and regulation of bacteriophage Mu promoters.</title>
        <authorList>
            <person name="Stoddard S.F."/>
            <person name="Howe M.M."/>
        </authorList>
    </citation>
    <scope>INDUCTION</scope>
</reference>
<reference key="6">
    <citation type="journal article" date="2003" name="EMBO Rep.">
        <title>The Gam protein of bacteriophage Mu is an orthologue of eukaryotic Ku.</title>
        <authorList>
            <person name="d'Adda di Fagagna F."/>
            <person name="Weller G.R."/>
            <person name="Doherty A.J."/>
            <person name="Jackson S.P."/>
        </authorList>
    </citation>
    <scope>FUNCTION</scope>
    <scope>DNA-BINDING</scope>
    <scope>SUBUNIT</scope>
</reference>
<organismHost>
    <name type="scientific">Enterobacteriaceae</name>
    <dbReference type="NCBI Taxonomy" id="543"/>
</organismHost>
<proteinExistence type="evidence at protein level"/>
<name>GAM_BPMU</name>